<accession>P62637</accession>
<gene>
    <name evidence="1" type="primary">cheB2</name>
    <name type="ordered locus">DVU_2078</name>
</gene>
<reference key="1">
    <citation type="journal article" date="2004" name="Nat. Biotechnol.">
        <title>The genome sequence of the anaerobic, sulfate-reducing bacterium Desulfovibrio vulgaris Hildenborough.</title>
        <authorList>
            <person name="Heidelberg J.F."/>
            <person name="Seshadri R."/>
            <person name="Haveman S.A."/>
            <person name="Hemme C.L."/>
            <person name="Paulsen I.T."/>
            <person name="Kolonay J.F."/>
            <person name="Eisen J.A."/>
            <person name="Ward N.L."/>
            <person name="Methe B.A."/>
            <person name="Brinkac L.M."/>
            <person name="Daugherty S.C."/>
            <person name="DeBoy R.T."/>
            <person name="Dodson R.J."/>
            <person name="Durkin A.S."/>
            <person name="Madupu R."/>
            <person name="Nelson W.C."/>
            <person name="Sullivan S.A."/>
            <person name="Fouts D.E."/>
            <person name="Haft D.H."/>
            <person name="Selengut J."/>
            <person name="Peterson J.D."/>
            <person name="Davidsen T.M."/>
            <person name="Zafar N."/>
            <person name="Zhou L."/>
            <person name="Radune D."/>
            <person name="Dimitrov G."/>
            <person name="Hance M."/>
            <person name="Tran K."/>
            <person name="Khouri H.M."/>
            <person name="Gill J."/>
            <person name="Utterback T.R."/>
            <person name="Feldblyum T.V."/>
            <person name="Wall J.D."/>
            <person name="Voordouw G."/>
            <person name="Fraser C.M."/>
        </authorList>
    </citation>
    <scope>NUCLEOTIDE SEQUENCE [LARGE SCALE GENOMIC DNA]</scope>
    <source>
        <strain>ATCC 29579 / DSM 644 / CCUG 34227 / NCIMB 8303 / VKM B-1760 / Hildenborough</strain>
    </source>
</reference>
<evidence type="ECO:0000255" key="1">
    <source>
        <dbReference type="HAMAP-Rule" id="MF_00099"/>
    </source>
</evidence>
<evidence type="ECO:0000256" key="2">
    <source>
        <dbReference type="SAM" id="MobiDB-lite"/>
    </source>
</evidence>
<protein>
    <recommendedName>
        <fullName evidence="1">Protein-glutamate methylesterase/protein-glutamine glutaminase 2</fullName>
        <ecNumber evidence="1">3.1.1.61</ecNumber>
        <ecNumber evidence="1">3.5.1.44</ecNumber>
    </recommendedName>
</protein>
<proteinExistence type="inferred from homology"/>
<keyword id="KW-0145">Chemotaxis</keyword>
<keyword id="KW-0963">Cytoplasm</keyword>
<keyword id="KW-0378">Hydrolase</keyword>
<keyword id="KW-0597">Phosphoprotein</keyword>
<keyword id="KW-1185">Reference proteome</keyword>
<organism>
    <name type="scientific">Nitratidesulfovibrio vulgaris (strain ATCC 29579 / DSM 644 / CCUG 34227 / NCIMB 8303 / VKM B-1760 / Hildenborough)</name>
    <name type="common">Desulfovibrio vulgaris</name>
    <dbReference type="NCBI Taxonomy" id="882"/>
    <lineage>
        <taxon>Bacteria</taxon>
        <taxon>Pseudomonadati</taxon>
        <taxon>Thermodesulfobacteriota</taxon>
        <taxon>Desulfovibrionia</taxon>
        <taxon>Desulfovibrionales</taxon>
        <taxon>Desulfovibrionaceae</taxon>
        <taxon>Nitratidesulfovibrio</taxon>
    </lineage>
</organism>
<sequence length="367" mass="39075">MISVVVVDDSAFMRKALSTMLEKDPEIRVVATARDGEEGLQVIRQHNPDVVTLDIEMPRMDGLTTLRHIMMEMPRPVLMVSSLTTEGAEATLKALELGAVDFIPKQLSKVSLDIVRIENDLREKVKEVSKRRMLRTPRPVRPAPTASAPAQTAQVASAAPATAPSRPAMPATRASRPVRDVVAIGVSTGGPPAVQKVLSQLPADFPASILIAQHMPAAFTGPFAKRLDGVCAISVKEAESGEKLKPGTAYIAPGGKHLRVEQRVSHMEVVVTTDPADALYKPSANVLMESVGQSMGRRALGVILTGMGSDGMEGMKVLKQKGGRSIAQSDATCVVYGMPKAIVDAGLADEIVDIDDMAAAIMNGLYK</sequence>
<dbReference type="EC" id="3.1.1.61" evidence="1"/>
<dbReference type="EC" id="3.5.1.44" evidence="1"/>
<dbReference type="EMBL" id="AE017285">
    <property type="protein sequence ID" value="AAS96551.1"/>
    <property type="molecule type" value="Genomic_DNA"/>
</dbReference>
<dbReference type="RefSeq" id="WP_010939356.1">
    <property type="nucleotide sequence ID" value="NC_002937.3"/>
</dbReference>
<dbReference type="RefSeq" id="YP_011291.1">
    <property type="nucleotide sequence ID" value="NC_002937.3"/>
</dbReference>
<dbReference type="SMR" id="P62637"/>
<dbReference type="STRING" id="882.DVU_2078"/>
<dbReference type="PaxDb" id="882-DVU_2078"/>
<dbReference type="EnsemblBacteria" id="AAS96551">
    <property type="protein sequence ID" value="AAS96551"/>
    <property type="gene ID" value="DVU_2078"/>
</dbReference>
<dbReference type="KEGG" id="dvu:DVU_2078"/>
<dbReference type="PATRIC" id="fig|882.5.peg.1892"/>
<dbReference type="eggNOG" id="COG2201">
    <property type="taxonomic scope" value="Bacteria"/>
</dbReference>
<dbReference type="HOGENOM" id="CLU_000445_51_0_7"/>
<dbReference type="OrthoDB" id="9793421at2"/>
<dbReference type="PhylomeDB" id="P62637"/>
<dbReference type="Proteomes" id="UP000002194">
    <property type="component" value="Chromosome"/>
</dbReference>
<dbReference type="GO" id="GO:0005737">
    <property type="term" value="C:cytoplasm"/>
    <property type="evidence" value="ECO:0007669"/>
    <property type="project" value="UniProtKB-SubCell"/>
</dbReference>
<dbReference type="GO" id="GO:0000156">
    <property type="term" value="F:phosphorelay response regulator activity"/>
    <property type="evidence" value="ECO:0007669"/>
    <property type="project" value="InterPro"/>
</dbReference>
<dbReference type="GO" id="GO:0008984">
    <property type="term" value="F:protein-glutamate methylesterase activity"/>
    <property type="evidence" value="ECO:0007669"/>
    <property type="project" value="UniProtKB-UniRule"/>
</dbReference>
<dbReference type="GO" id="GO:0050568">
    <property type="term" value="F:protein-glutamine glutaminase activity"/>
    <property type="evidence" value="ECO:0007669"/>
    <property type="project" value="UniProtKB-UniRule"/>
</dbReference>
<dbReference type="GO" id="GO:0006935">
    <property type="term" value="P:chemotaxis"/>
    <property type="evidence" value="ECO:0007669"/>
    <property type="project" value="UniProtKB-UniRule"/>
</dbReference>
<dbReference type="CDD" id="cd16432">
    <property type="entry name" value="CheB_Rec"/>
    <property type="match status" value="1"/>
</dbReference>
<dbReference type="CDD" id="cd17541">
    <property type="entry name" value="REC_CheB-like"/>
    <property type="match status" value="1"/>
</dbReference>
<dbReference type="Gene3D" id="3.40.50.2300">
    <property type="match status" value="1"/>
</dbReference>
<dbReference type="Gene3D" id="3.40.50.180">
    <property type="entry name" value="Methylesterase CheB, C-terminal domain"/>
    <property type="match status" value="1"/>
</dbReference>
<dbReference type="HAMAP" id="MF_00099">
    <property type="entry name" value="CheB_chemtxs"/>
    <property type="match status" value="1"/>
</dbReference>
<dbReference type="InterPro" id="IPR008248">
    <property type="entry name" value="CheB-like"/>
</dbReference>
<dbReference type="InterPro" id="IPR035909">
    <property type="entry name" value="CheB_C"/>
</dbReference>
<dbReference type="InterPro" id="IPR011006">
    <property type="entry name" value="CheY-like_superfamily"/>
</dbReference>
<dbReference type="InterPro" id="IPR000673">
    <property type="entry name" value="Sig_transdc_resp-reg_Me-estase"/>
</dbReference>
<dbReference type="InterPro" id="IPR001789">
    <property type="entry name" value="Sig_transdc_resp-reg_receiver"/>
</dbReference>
<dbReference type="NCBIfam" id="NF001965">
    <property type="entry name" value="PRK00742.1"/>
    <property type="match status" value="1"/>
</dbReference>
<dbReference type="NCBIfam" id="NF009206">
    <property type="entry name" value="PRK12555.1"/>
    <property type="match status" value="1"/>
</dbReference>
<dbReference type="PANTHER" id="PTHR42872">
    <property type="entry name" value="PROTEIN-GLUTAMATE METHYLESTERASE/PROTEIN-GLUTAMINE GLUTAMINASE"/>
    <property type="match status" value="1"/>
</dbReference>
<dbReference type="PANTHER" id="PTHR42872:SF3">
    <property type="entry name" value="PROTEIN-GLUTAMATE METHYLESTERASE_PROTEIN-GLUTAMINE GLUTAMINASE 1"/>
    <property type="match status" value="1"/>
</dbReference>
<dbReference type="Pfam" id="PF01339">
    <property type="entry name" value="CheB_methylest"/>
    <property type="match status" value="1"/>
</dbReference>
<dbReference type="Pfam" id="PF00072">
    <property type="entry name" value="Response_reg"/>
    <property type="match status" value="1"/>
</dbReference>
<dbReference type="PIRSF" id="PIRSF000876">
    <property type="entry name" value="RR_chemtxs_CheB"/>
    <property type="match status" value="1"/>
</dbReference>
<dbReference type="SMART" id="SM00448">
    <property type="entry name" value="REC"/>
    <property type="match status" value="1"/>
</dbReference>
<dbReference type="SUPFAM" id="SSF52172">
    <property type="entry name" value="CheY-like"/>
    <property type="match status" value="1"/>
</dbReference>
<dbReference type="SUPFAM" id="SSF52738">
    <property type="entry name" value="Methylesterase CheB, C-terminal domain"/>
    <property type="match status" value="1"/>
</dbReference>
<dbReference type="PROSITE" id="PS50122">
    <property type="entry name" value="CHEB"/>
    <property type="match status" value="1"/>
</dbReference>
<dbReference type="PROSITE" id="PS50110">
    <property type="entry name" value="RESPONSE_REGULATORY"/>
    <property type="match status" value="1"/>
</dbReference>
<comment type="function">
    <text evidence="1">Involved in chemotaxis. Part of a chemotaxis signal transduction system that modulates chemotaxis in response to various stimuli. Catalyzes the demethylation of specific methylglutamate residues introduced into the chemoreceptors (methyl-accepting chemotaxis proteins or MCP) by CheR. Also mediates the irreversible deamidation of specific glutamine residues to glutamic acid.</text>
</comment>
<comment type="catalytic activity">
    <reaction evidence="1">
        <text>[protein]-L-glutamate 5-O-methyl ester + H2O = L-glutamyl-[protein] + methanol + H(+)</text>
        <dbReference type="Rhea" id="RHEA:23236"/>
        <dbReference type="Rhea" id="RHEA-COMP:10208"/>
        <dbReference type="Rhea" id="RHEA-COMP:10311"/>
        <dbReference type="ChEBI" id="CHEBI:15377"/>
        <dbReference type="ChEBI" id="CHEBI:15378"/>
        <dbReference type="ChEBI" id="CHEBI:17790"/>
        <dbReference type="ChEBI" id="CHEBI:29973"/>
        <dbReference type="ChEBI" id="CHEBI:82795"/>
        <dbReference type="EC" id="3.1.1.61"/>
    </reaction>
</comment>
<comment type="catalytic activity">
    <reaction evidence="1">
        <text>L-glutaminyl-[protein] + H2O = L-glutamyl-[protein] + NH4(+)</text>
        <dbReference type="Rhea" id="RHEA:16441"/>
        <dbReference type="Rhea" id="RHEA-COMP:10207"/>
        <dbReference type="Rhea" id="RHEA-COMP:10208"/>
        <dbReference type="ChEBI" id="CHEBI:15377"/>
        <dbReference type="ChEBI" id="CHEBI:28938"/>
        <dbReference type="ChEBI" id="CHEBI:29973"/>
        <dbReference type="ChEBI" id="CHEBI:30011"/>
        <dbReference type="EC" id="3.5.1.44"/>
    </reaction>
</comment>
<comment type="subcellular location">
    <subcellularLocation>
        <location evidence="1">Cytoplasm</location>
    </subcellularLocation>
</comment>
<comment type="domain">
    <text evidence="1">Contains a C-terminal catalytic domain, and an N-terminal region which modulates catalytic activity.</text>
</comment>
<comment type="PTM">
    <text evidence="1">Phosphorylated by CheA. Phosphorylation of the N-terminal regulatory domain activates the methylesterase activity.</text>
</comment>
<comment type="similarity">
    <text evidence="1">Belongs to the CheB family.</text>
</comment>
<name>CHEB2_NITV2</name>
<feature type="chain" id="PRO_0000157991" description="Protein-glutamate methylesterase/protein-glutamine glutaminase 2">
    <location>
        <begin position="1"/>
        <end position="367"/>
    </location>
</feature>
<feature type="domain" description="Response regulatory" evidence="1">
    <location>
        <begin position="3"/>
        <end position="120"/>
    </location>
</feature>
<feature type="domain" description="CheB-type methylesterase" evidence="1">
    <location>
        <begin position="175"/>
        <end position="367"/>
    </location>
</feature>
<feature type="region of interest" description="Disordered" evidence="2">
    <location>
        <begin position="132"/>
        <end position="174"/>
    </location>
</feature>
<feature type="compositionally biased region" description="Low complexity" evidence="2">
    <location>
        <begin position="143"/>
        <end position="174"/>
    </location>
</feature>
<feature type="active site" evidence="1">
    <location>
        <position position="187"/>
    </location>
</feature>
<feature type="active site" evidence="1">
    <location>
        <position position="214"/>
    </location>
</feature>
<feature type="active site" evidence="1">
    <location>
        <position position="310"/>
    </location>
</feature>
<feature type="modified residue" description="4-aspartylphosphate" evidence="1">
    <location>
        <position position="54"/>
    </location>
</feature>